<name>LEP_RICTY</name>
<organism>
    <name type="scientific">Rickettsia typhi (strain ATCC VR-144 / Wilmington)</name>
    <dbReference type="NCBI Taxonomy" id="257363"/>
    <lineage>
        <taxon>Bacteria</taxon>
        <taxon>Pseudomonadati</taxon>
        <taxon>Pseudomonadota</taxon>
        <taxon>Alphaproteobacteria</taxon>
        <taxon>Rickettsiales</taxon>
        <taxon>Rickettsiaceae</taxon>
        <taxon>Rickettsieae</taxon>
        <taxon>Rickettsia</taxon>
        <taxon>typhus group</taxon>
    </lineage>
</organism>
<dbReference type="EC" id="3.4.21.89"/>
<dbReference type="EMBL" id="AF503336">
    <property type="protein sequence ID" value="AAM22228.1"/>
    <property type="molecule type" value="Genomic_DNA"/>
</dbReference>
<dbReference type="EMBL" id="AE017197">
    <property type="protein sequence ID" value="AAU03508.1"/>
    <property type="molecule type" value="Genomic_DNA"/>
</dbReference>
<dbReference type="RefSeq" id="WP_011190495.1">
    <property type="nucleotide sequence ID" value="NC_006142.1"/>
</dbReference>
<dbReference type="SMR" id="Q8L2J7"/>
<dbReference type="MEROPS" id="S26.001"/>
<dbReference type="KEGG" id="rty:RT0020"/>
<dbReference type="eggNOG" id="COG0681">
    <property type="taxonomic scope" value="Bacteria"/>
</dbReference>
<dbReference type="HOGENOM" id="CLU_028723_1_2_5"/>
<dbReference type="OrthoDB" id="9815782at2"/>
<dbReference type="Proteomes" id="UP000000604">
    <property type="component" value="Chromosome"/>
</dbReference>
<dbReference type="GO" id="GO:0005886">
    <property type="term" value="C:plasma membrane"/>
    <property type="evidence" value="ECO:0007669"/>
    <property type="project" value="UniProtKB-SubCell"/>
</dbReference>
<dbReference type="GO" id="GO:0004252">
    <property type="term" value="F:serine-type endopeptidase activity"/>
    <property type="evidence" value="ECO:0007669"/>
    <property type="project" value="UniProtKB-EC"/>
</dbReference>
<dbReference type="GO" id="GO:0006465">
    <property type="term" value="P:signal peptide processing"/>
    <property type="evidence" value="ECO:0007669"/>
    <property type="project" value="InterPro"/>
</dbReference>
<dbReference type="CDD" id="cd06530">
    <property type="entry name" value="S26_SPase_I"/>
    <property type="match status" value="1"/>
</dbReference>
<dbReference type="Gene3D" id="2.10.109.10">
    <property type="entry name" value="Umud Fragment, subunit A"/>
    <property type="match status" value="1"/>
</dbReference>
<dbReference type="InterPro" id="IPR036286">
    <property type="entry name" value="LexA/Signal_pep-like_sf"/>
</dbReference>
<dbReference type="InterPro" id="IPR000223">
    <property type="entry name" value="Pept_S26A_signal_pept_1"/>
</dbReference>
<dbReference type="InterPro" id="IPR019758">
    <property type="entry name" value="Pept_S26A_signal_pept_1_CS"/>
</dbReference>
<dbReference type="InterPro" id="IPR019757">
    <property type="entry name" value="Pept_S26A_signal_pept_1_Lys-AS"/>
</dbReference>
<dbReference type="InterPro" id="IPR019533">
    <property type="entry name" value="Peptidase_S26"/>
</dbReference>
<dbReference type="NCBIfam" id="TIGR02227">
    <property type="entry name" value="sigpep_I_bact"/>
    <property type="match status" value="1"/>
</dbReference>
<dbReference type="PANTHER" id="PTHR43390:SF1">
    <property type="entry name" value="CHLOROPLAST PROCESSING PEPTIDASE"/>
    <property type="match status" value="1"/>
</dbReference>
<dbReference type="PANTHER" id="PTHR43390">
    <property type="entry name" value="SIGNAL PEPTIDASE I"/>
    <property type="match status" value="1"/>
</dbReference>
<dbReference type="Pfam" id="PF10502">
    <property type="entry name" value="Peptidase_S26"/>
    <property type="match status" value="1"/>
</dbReference>
<dbReference type="PRINTS" id="PR00727">
    <property type="entry name" value="LEADERPTASE"/>
</dbReference>
<dbReference type="SUPFAM" id="SSF51306">
    <property type="entry name" value="LexA/Signal peptidase"/>
    <property type="match status" value="1"/>
</dbReference>
<dbReference type="PROSITE" id="PS00760">
    <property type="entry name" value="SPASE_I_2"/>
    <property type="match status" value="1"/>
</dbReference>
<dbReference type="PROSITE" id="PS00761">
    <property type="entry name" value="SPASE_I_3"/>
    <property type="match status" value="1"/>
</dbReference>
<feature type="chain" id="PRO_0000316278" description="Signal peptidase I">
    <location>
        <begin position="1"/>
        <end position="264"/>
    </location>
</feature>
<feature type="topological domain" description="Cytoplasmic" evidence="2">
    <location>
        <begin position="1"/>
        <end position="18"/>
    </location>
</feature>
<feature type="transmembrane region" description="Helical" evidence="2">
    <location>
        <begin position="19"/>
        <end position="39"/>
    </location>
</feature>
<feature type="topological domain" description="Periplasmic" evidence="2">
    <location>
        <begin position="40"/>
        <end position="264"/>
    </location>
</feature>
<feature type="active site" evidence="1">
    <location>
        <position position="43"/>
    </location>
</feature>
<feature type="active site" evidence="1">
    <location>
        <position position="106"/>
    </location>
</feature>
<accession>Q8L2J7</accession>
<protein>
    <recommendedName>
        <fullName>Signal peptidase I</fullName>
        <shortName>SPase I</shortName>
        <ecNumber>3.4.21.89</ecNumber>
    </recommendedName>
    <alternativeName>
        <fullName>Leader peptidase I</fullName>
    </alternativeName>
</protein>
<keyword id="KW-0997">Cell inner membrane</keyword>
<keyword id="KW-1003">Cell membrane</keyword>
<keyword id="KW-0378">Hydrolase</keyword>
<keyword id="KW-0472">Membrane</keyword>
<keyword id="KW-0812">Transmembrane</keyword>
<keyword id="KW-1133">Transmembrane helix</keyword>
<comment type="function">
    <text>Complements E.coli mutants temperature-sensitive for LepB function.</text>
</comment>
<comment type="catalytic activity">
    <reaction>
        <text>Cleavage of hydrophobic, N-terminal signal or leader sequences from secreted and periplasmic proteins.</text>
        <dbReference type="EC" id="3.4.21.89"/>
    </reaction>
</comment>
<comment type="subcellular location">
    <subcellularLocation>
        <location evidence="3">Cell inner membrane</location>
        <topology evidence="3">Single-pass type II membrane protein</topology>
    </subcellularLocation>
</comment>
<comment type="similarity">
    <text evidence="3">Belongs to the peptidase S26 family.</text>
</comment>
<reference key="1">
    <citation type="journal article" date="2003" name="J. Bacteriol.">
        <title>Molecular and functional analysis of the lepB gene, encoding a type I signal peptidase from Rickettsia rickettsii and Rickettsia typhi.</title>
        <authorList>
            <person name="Rahman M.S."/>
            <person name="Simser J.A."/>
            <person name="Macaluso K.R."/>
            <person name="Azad A.F."/>
        </authorList>
    </citation>
    <scope>NUCLEOTIDE SEQUENCE [GENOMIC DNA]</scope>
    <scope>CHARACTERIZATION IN E.COLI</scope>
    <source>
        <strain>Ethiopian AZ322</strain>
    </source>
</reference>
<reference key="2">
    <citation type="journal article" date="2004" name="J. Bacteriol.">
        <title>Complete genome sequence of Rickettsia typhi and comparison with sequences of other Rickettsiae.</title>
        <authorList>
            <person name="McLeod M.P."/>
            <person name="Qin X."/>
            <person name="Karpathy S.E."/>
            <person name="Gioia J."/>
            <person name="Highlander S.K."/>
            <person name="Fox G.E."/>
            <person name="McNeill T.Z."/>
            <person name="Jiang H."/>
            <person name="Muzny D."/>
            <person name="Jacob L.S."/>
            <person name="Hawes A.C."/>
            <person name="Sodergren E."/>
            <person name="Gill R."/>
            <person name="Hume J."/>
            <person name="Morgan M."/>
            <person name="Fan G."/>
            <person name="Amin A.G."/>
            <person name="Gibbs R.A."/>
            <person name="Hong C."/>
            <person name="Yu X.-J."/>
            <person name="Walker D.H."/>
            <person name="Weinstock G.M."/>
        </authorList>
    </citation>
    <scope>NUCLEOTIDE SEQUENCE [LARGE SCALE GENOMIC DNA]</scope>
    <source>
        <strain>ATCC VR-144 / Wilmington</strain>
    </source>
</reference>
<gene>
    <name type="primary">lepB</name>
    <name type="ordered locus">RT0020</name>
</gene>
<proteinExistence type="evidence at protein level"/>
<evidence type="ECO:0000250" key="1"/>
<evidence type="ECO:0000255" key="2"/>
<evidence type="ECO:0000305" key="3"/>
<sequence length="264" mass="30849">MNRDNTKTNKTVKQEFASFTFVICIALVIRILIMEPFTVPTGSMKATILENDYIFSTKYSYGYSNYSLSFFDFIPLFKGRVFAREPERGDIVVFRPPNDMSVRYIKRLIGLPGDKIQLIDDVIYINDKKIERTEVGTYIGEDGIKYLKFKETLPNGRTYFSYKLAPIFGIISNDRYSNTGVFYVPEGQYFFLGDNRDRSNDSRVNLGFVPFENFIGKAQFIWFSTKITWWDNDIGIINLILKLKPWIESVRLSRIFKNLYNVDE</sequence>